<dbReference type="EC" id="2.3.2.26" evidence="2"/>
<dbReference type="EMBL" id="U50842">
    <property type="protein sequence ID" value="AAB48949.1"/>
    <property type="molecule type" value="mRNA"/>
</dbReference>
<dbReference type="PIR" id="S70642">
    <property type="entry name" value="S70642"/>
</dbReference>
<dbReference type="RefSeq" id="NP_037118.1">
    <property type="nucleotide sequence ID" value="NM_012986.1"/>
</dbReference>
<dbReference type="PDB" id="1I5H">
    <property type="method" value="NMR"/>
    <property type="chains" value="W=452-499"/>
</dbReference>
<dbReference type="PDB" id="2N8S">
    <property type="method" value="NMR"/>
    <property type="chains" value="A=245-281"/>
</dbReference>
<dbReference type="PDB" id="2N8T">
    <property type="method" value="NMR"/>
    <property type="chains" value="A=401-437"/>
</dbReference>
<dbReference type="PDB" id="2N8U">
    <property type="method" value="NMR"/>
    <property type="chains" value="A=401-437"/>
</dbReference>
<dbReference type="PDBsum" id="1I5H"/>
<dbReference type="PDBsum" id="2N8S"/>
<dbReference type="PDBsum" id="2N8T"/>
<dbReference type="PDBsum" id="2N8U"/>
<dbReference type="BMRB" id="Q62940"/>
<dbReference type="SMR" id="Q62940"/>
<dbReference type="BioGRID" id="247522">
    <property type="interactions" value="101"/>
</dbReference>
<dbReference type="FunCoup" id="Q62940">
    <property type="interactions" value="2696"/>
</dbReference>
<dbReference type="IntAct" id="Q62940">
    <property type="interactions" value="2"/>
</dbReference>
<dbReference type="MINT" id="Q62940"/>
<dbReference type="STRING" id="10116.ENSRNOP00000074683"/>
<dbReference type="iPTMnet" id="Q62940"/>
<dbReference type="PhosphoSitePlus" id="Q62940"/>
<dbReference type="jPOST" id="Q62940"/>
<dbReference type="PaxDb" id="10116-ENSRNOP00000063797"/>
<dbReference type="PeptideAtlas" id="Q62940"/>
<dbReference type="GeneID" id="25489"/>
<dbReference type="KEGG" id="rno:25489"/>
<dbReference type="UCSC" id="RGD:3157">
    <property type="organism name" value="rat"/>
</dbReference>
<dbReference type="AGR" id="RGD:3157"/>
<dbReference type="CTD" id="4734"/>
<dbReference type="RGD" id="3157">
    <property type="gene designation" value="Nedd4"/>
</dbReference>
<dbReference type="eggNOG" id="KOG0940">
    <property type="taxonomic scope" value="Eukaryota"/>
</dbReference>
<dbReference type="InParanoid" id="Q62940"/>
<dbReference type="OrthoDB" id="423283at2759"/>
<dbReference type="PhylomeDB" id="Q62940"/>
<dbReference type="Reactome" id="R-RNO-1169408">
    <property type="pathway name" value="ISG15 antiviral mechanism"/>
</dbReference>
<dbReference type="Reactome" id="R-RNO-1253288">
    <property type="pathway name" value="Downregulation of ERBB4 signaling"/>
</dbReference>
<dbReference type="Reactome" id="R-RNO-8948747">
    <property type="pathway name" value="Regulation of PTEN localization"/>
</dbReference>
<dbReference type="Reactome" id="R-RNO-8948751">
    <property type="pathway name" value="Regulation of PTEN stability and activity"/>
</dbReference>
<dbReference type="Reactome" id="R-RNO-983168">
    <property type="pathway name" value="Antigen processing: Ubiquitination &amp; Proteasome degradation"/>
</dbReference>
<dbReference type="UniPathway" id="UPA00143"/>
<dbReference type="EvolutionaryTrace" id="Q62940"/>
<dbReference type="PRO" id="PR:Q62940"/>
<dbReference type="Proteomes" id="UP000002494">
    <property type="component" value="Unplaced"/>
</dbReference>
<dbReference type="GO" id="GO:0005938">
    <property type="term" value="C:cell cortex"/>
    <property type="evidence" value="ECO:0000266"/>
    <property type="project" value="RGD"/>
</dbReference>
<dbReference type="GO" id="GO:0000785">
    <property type="term" value="C:chromatin"/>
    <property type="evidence" value="ECO:0000266"/>
    <property type="project" value="RGD"/>
</dbReference>
<dbReference type="GO" id="GO:0005737">
    <property type="term" value="C:cytoplasm"/>
    <property type="evidence" value="ECO:0000250"/>
    <property type="project" value="UniProtKB"/>
</dbReference>
<dbReference type="GO" id="GO:0005829">
    <property type="term" value="C:cytosol"/>
    <property type="evidence" value="ECO:0000266"/>
    <property type="project" value="RGD"/>
</dbReference>
<dbReference type="GO" id="GO:0098978">
    <property type="term" value="C:glutamatergic synapse"/>
    <property type="evidence" value="ECO:0000314"/>
    <property type="project" value="SynGO"/>
</dbReference>
<dbReference type="GO" id="GO:0005794">
    <property type="term" value="C:Golgi apparatus"/>
    <property type="evidence" value="ECO:0000266"/>
    <property type="project" value="RGD"/>
</dbReference>
<dbReference type="GO" id="GO:0016020">
    <property type="term" value="C:membrane"/>
    <property type="evidence" value="ECO:0000266"/>
    <property type="project" value="RGD"/>
</dbReference>
<dbReference type="GO" id="GO:0005902">
    <property type="term" value="C:microvillus"/>
    <property type="evidence" value="ECO:0000314"/>
    <property type="project" value="RGD"/>
</dbReference>
<dbReference type="GO" id="GO:0005634">
    <property type="term" value="C:nucleus"/>
    <property type="evidence" value="ECO:0000250"/>
    <property type="project" value="UniProtKB"/>
</dbReference>
<dbReference type="GO" id="GO:0048471">
    <property type="term" value="C:perinuclear region of cytoplasm"/>
    <property type="evidence" value="ECO:0000266"/>
    <property type="project" value="RGD"/>
</dbReference>
<dbReference type="GO" id="GO:0005886">
    <property type="term" value="C:plasma membrane"/>
    <property type="evidence" value="ECO:0000266"/>
    <property type="project" value="RGD"/>
</dbReference>
<dbReference type="GO" id="GO:0099524">
    <property type="term" value="C:postsynaptic cytosol"/>
    <property type="evidence" value="ECO:0000266"/>
    <property type="project" value="RGD"/>
</dbReference>
<dbReference type="GO" id="GO:0032991">
    <property type="term" value="C:protein-containing complex"/>
    <property type="evidence" value="ECO:0000266"/>
    <property type="project" value="RGD"/>
</dbReference>
<dbReference type="GO" id="GO:0000151">
    <property type="term" value="C:ubiquitin ligase complex"/>
    <property type="evidence" value="ECO:0000266"/>
    <property type="project" value="RGD"/>
</dbReference>
<dbReference type="GO" id="GO:0031698">
    <property type="term" value="F:beta-2 adrenergic receptor binding"/>
    <property type="evidence" value="ECO:0000266"/>
    <property type="project" value="RGD"/>
</dbReference>
<dbReference type="GO" id="GO:0019899">
    <property type="term" value="F:enzyme binding"/>
    <property type="evidence" value="ECO:0000266"/>
    <property type="project" value="RGD"/>
</dbReference>
<dbReference type="GO" id="GO:0035255">
    <property type="term" value="F:ionotropic glutamate receptor binding"/>
    <property type="evidence" value="ECO:0000266"/>
    <property type="project" value="RGD"/>
</dbReference>
<dbReference type="GO" id="GO:0050815">
    <property type="term" value="F:phosphoserine residue binding"/>
    <property type="evidence" value="ECO:0000266"/>
    <property type="project" value="RGD"/>
</dbReference>
<dbReference type="GO" id="GO:0050816">
    <property type="term" value="F:phosphothreonine residue binding"/>
    <property type="evidence" value="ECO:0000266"/>
    <property type="project" value="RGD"/>
</dbReference>
<dbReference type="GO" id="GO:0070064">
    <property type="term" value="F:proline-rich region binding"/>
    <property type="evidence" value="ECO:0000266"/>
    <property type="project" value="RGD"/>
</dbReference>
<dbReference type="GO" id="GO:0019904">
    <property type="term" value="F:protein domain specific binding"/>
    <property type="evidence" value="ECO:0000266"/>
    <property type="project" value="RGD"/>
</dbReference>
<dbReference type="GO" id="GO:0070063">
    <property type="term" value="F:RNA polymerase binding"/>
    <property type="evidence" value="ECO:0000266"/>
    <property type="project" value="RGD"/>
</dbReference>
<dbReference type="GO" id="GO:0019871">
    <property type="term" value="F:sodium channel inhibitor activity"/>
    <property type="evidence" value="ECO:0000266"/>
    <property type="project" value="RGD"/>
</dbReference>
<dbReference type="GO" id="GO:0043130">
    <property type="term" value="F:ubiquitin binding"/>
    <property type="evidence" value="ECO:0000266"/>
    <property type="project" value="RGD"/>
</dbReference>
<dbReference type="GO" id="GO:0061630">
    <property type="term" value="F:ubiquitin protein ligase activity"/>
    <property type="evidence" value="ECO:0000250"/>
    <property type="project" value="UniProtKB"/>
</dbReference>
<dbReference type="GO" id="GO:0004842">
    <property type="term" value="F:ubiquitin-protein transferase activity"/>
    <property type="evidence" value="ECO:0000314"/>
    <property type="project" value="UniProtKB"/>
</dbReference>
<dbReference type="GO" id="GO:0002250">
    <property type="term" value="P:adaptive immune response"/>
    <property type="evidence" value="ECO:0000266"/>
    <property type="project" value="RGD"/>
</dbReference>
<dbReference type="GO" id="GO:0048514">
    <property type="term" value="P:blood vessel morphogenesis"/>
    <property type="evidence" value="ECO:0000266"/>
    <property type="project" value="RGD"/>
</dbReference>
<dbReference type="GO" id="GO:0034644">
    <property type="term" value="P:cellular response to UV"/>
    <property type="evidence" value="ECO:0000266"/>
    <property type="project" value="RGD"/>
</dbReference>
<dbReference type="GO" id="GO:0006974">
    <property type="term" value="P:DNA damage response"/>
    <property type="evidence" value="ECO:0000266"/>
    <property type="project" value="RGD"/>
</dbReference>
<dbReference type="GO" id="GO:0003197">
    <property type="term" value="P:endocardial cushion development"/>
    <property type="evidence" value="ECO:0000266"/>
    <property type="project" value="RGD"/>
</dbReference>
<dbReference type="GO" id="GO:0051649">
    <property type="term" value="P:establishment of localization in cell"/>
    <property type="evidence" value="ECO:0000266"/>
    <property type="project" value="RGD"/>
</dbReference>
<dbReference type="GO" id="GO:0006955">
    <property type="term" value="P:immune response"/>
    <property type="evidence" value="ECO:0000270"/>
    <property type="project" value="RGD"/>
</dbReference>
<dbReference type="GO" id="GO:0045087">
    <property type="term" value="P:innate immune response"/>
    <property type="evidence" value="ECO:0000266"/>
    <property type="project" value="RGD"/>
</dbReference>
<dbReference type="GO" id="GO:0007041">
    <property type="term" value="P:lysosomal transport"/>
    <property type="evidence" value="ECO:0000266"/>
    <property type="project" value="RGD"/>
</dbReference>
<dbReference type="GO" id="GO:0010766">
    <property type="term" value="P:negative regulation of sodium ion transport"/>
    <property type="evidence" value="ECO:0000266"/>
    <property type="project" value="RGD"/>
</dbReference>
<dbReference type="GO" id="GO:0000122">
    <property type="term" value="P:negative regulation of transcription by RNA polymerase II"/>
    <property type="evidence" value="ECO:0000266"/>
    <property type="project" value="RGD"/>
</dbReference>
<dbReference type="GO" id="GO:0030948">
    <property type="term" value="P:negative regulation of vascular endothelial growth factor receptor signaling pathway"/>
    <property type="evidence" value="ECO:0000250"/>
    <property type="project" value="UniProtKB"/>
</dbReference>
<dbReference type="GO" id="GO:0007528">
    <property type="term" value="P:neuromuscular junction development"/>
    <property type="evidence" value="ECO:0000266"/>
    <property type="project" value="RGD"/>
</dbReference>
<dbReference type="GO" id="GO:0031175">
    <property type="term" value="P:neuron projection development"/>
    <property type="evidence" value="ECO:0000266"/>
    <property type="project" value="RGD"/>
</dbReference>
<dbReference type="GO" id="GO:0042921">
    <property type="term" value="P:nuclear receptor-mediated glucocorticoid signaling pathway"/>
    <property type="evidence" value="ECO:0000266"/>
    <property type="project" value="RGD"/>
</dbReference>
<dbReference type="GO" id="GO:0003151">
    <property type="term" value="P:outflow tract morphogenesis"/>
    <property type="evidence" value="ECO:0000266"/>
    <property type="project" value="RGD"/>
</dbReference>
<dbReference type="GO" id="GO:0046824">
    <property type="term" value="P:positive regulation of nucleocytoplasmic transport"/>
    <property type="evidence" value="ECO:0000266"/>
    <property type="project" value="RGD"/>
</dbReference>
<dbReference type="GO" id="GO:0051897">
    <property type="term" value="P:positive regulation of phosphatidylinositol 3-kinase/protein kinase B signal transduction"/>
    <property type="evidence" value="ECO:0000266"/>
    <property type="project" value="RGD"/>
</dbReference>
<dbReference type="GO" id="GO:0045732">
    <property type="term" value="P:positive regulation of protein catabolic process"/>
    <property type="evidence" value="ECO:0000266"/>
    <property type="project" value="RGD"/>
</dbReference>
<dbReference type="GO" id="GO:0050847">
    <property type="term" value="P:progesterone receptor signaling pathway"/>
    <property type="evidence" value="ECO:0000266"/>
    <property type="project" value="RGD"/>
</dbReference>
<dbReference type="GO" id="GO:0070534">
    <property type="term" value="P:protein K63-linked ubiquitination"/>
    <property type="evidence" value="ECO:0000314"/>
    <property type="project" value="UniProtKB"/>
</dbReference>
<dbReference type="GO" id="GO:0006513">
    <property type="term" value="P:protein monoubiquitination"/>
    <property type="evidence" value="ECO:0000266"/>
    <property type="project" value="RGD"/>
</dbReference>
<dbReference type="GO" id="GO:0006622">
    <property type="term" value="P:protein targeting to lysosome"/>
    <property type="evidence" value="ECO:0000266"/>
    <property type="project" value="RGD"/>
</dbReference>
<dbReference type="GO" id="GO:0016567">
    <property type="term" value="P:protein ubiquitination"/>
    <property type="evidence" value="ECO:0000250"/>
    <property type="project" value="UniProtKB"/>
</dbReference>
<dbReference type="GO" id="GO:0032801">
    <property type="term" value="P:receptor catabolic process"/>
    <property type="evidence" value="ECO:0000266"/>
    <property type="project" value="RGD"/>
</dbReference>
<dbReference type="GO" id="GO:0031623">
    <property type="term" value="P:receptor internalization"/>
    <property type="evidence" value="ECO:0000266"/>
    <property type="project" value="RGD"/>
</dbReference>
<dbReference type="GO" id="GO:0048814">
    <property type="term" value="P:regulation of dendrite morphogenesis"/>
    <property type="evidence" value="ECO:0000314"/>
    <property type="project" value="UniProtKB"/>
</dbReference>
<dbReference type="GO" id="GO:0042391">
    <property type="term" value="P:regulation of membrane potential"/>
    <property type="evidence" value="ECO:0000266"/>
    <property type="project" value="RGD"/>
</dbReference>
<dbReference type="GO" id="GO:0034765">
    <property type="term" value="P:regulation of monoatomic ion transmembrane transport"/>
    <property type="evidence" value="ECO:0000266"/>
    <property type="project" value="RGD"/>
</dbReference>
<dbReference type="GO" id="GO:0099149">
    <property type="term" value="P:regulation of postsynaptic neurotransmitter receptor internalization"/>
    <property type="evidence" value="ECO:0000314"/>
    <property type="project" value="SynGO"/>
</dbReference>
<dbReference type="GO" id="GO:0099576">
    <property type="term" value="P:regulation of protein catabolic process at postsynapse, modulating synaptic transmission"/>
    <property type="evidence" value="ECO:0000314"/>
    <property type="project" value="SynGO"/>
</dbReference>
<dbReference type="GO" id="GO:0050807">
    <property type="term" value="P:regulation of synapse organization"/>
    <property type="evidence" value="ECO:0000266"/>
    <property type="project" value="RGD"/>
</dbReference>
<dbReference type="GO" id="GO:0140252">
    <property type="term" value="P:regulation protein catabolic process at postsynapse"/>
    <property type="evidence" value="ECO:0000314"/>
    <property type="project" value="SynGO"/>
</dbReference>
<dbReference type="GO" id="GO:0014894">
    <property type="term" value="P:response to denervation involved in regulation of muscle adaptation"/>
    <property type="evidence" value="ECO:0000270"/>
    <property type="project" value="RGD"/>
</dbReference>
<dbReference type="GO" id="GO:0006814">
    <property type="term" value="P:sodium ion transport"/>
    <property type="evidence" value="ECO:0000266"/>
    <property type="project" value="RGD"/>
</dbReference>
<dbReference type="GO" id="GO:0042110">
    <property type="term" value="P:T cell activation"/>
    <property type="evidence" value="ECO:0000266"/>
    <property type="project" value="RGD"/>
</dbReference>
<dbReference type="GO" id="GO:0006511">
    <property type="term" value="P:ubiquitin-dependent protein catabolic process"/>
    <property type="evidence" value="ECO:0000250"/>
    <property type="project" value="UniProtKB"/>
</dbReference>
<dbReference type="GO" id="GO:0043162">
    <property type="term" value="P:ubiquitin-dependent protein catabolic process via the multivesicular body sorting pathway"/>
    <property type="evidence" value="ECO:0000266"/>
    <property type="project" value="RGD"/>
</dbReference>
<dbReference type="CDD" id="cd04033">
    <property type="entry name" value="C2_NEDD4_NEDD4L"/>
    <property type="match status" value="1"/>
</dbReference>
<dbReference type="CDD" id="cd00078">
    <property type="entry name" value="HECTc"/>
    <property type="match status" value="1"/>
</dbReference>
<dbReference type="CDD" id="cd00201">
    <property type="entry name" value="WW"/>
    <property type="match status" value="3"/>
</dbReference>
<dbReference type="FunFam" id="2.20.70.10:FF:000005">
    <property type="entry name" value="E3 ubiquitin-protein ligase"/>
    <property type="match status" value="1"/>
</dbReference>
<dbReference type="FunFam" id="3.90.1750.10:FF:000026">
    <property type="entry name" value="E3 ubiquitin-protein ligase HACE1"/>
    <property type="match status" value="1"/>
</dbReference>
<dbReference type="FunFam" id="2.20.70.10:FF:000099">
    <property type="entry name" value="E3 ubiquitin-protein ligase NEDD4"/>
    <property type="match status" value="1"/>
</dbReference>
<dbReference type="FunFam" id="2.20.70.10:FF:000096">
    <property type="entry name" value="E3 ubiquitin-protein ligase NEDD4 isoform X4"/>
    <property type="match status" value="1"/>
</dbReference>
<dbReference type="FunFam" id="3.30.2160.10:FF:000001">
    <property type="entry name" value="E3 ubiquitin-protein ligase NEDD4-like"/>
    <property type="match status" value="1"/>
</dbReference>
<dbReference type="FunFam" id="3.30.2410.10:FF:000001">
    <property type="entry name" value="E3 ubiquitin-protein ligase NEDD4-like"/>
    <property type="match status" value="1"/>
</dbReference>
<dbReference type="FunFam" id="3.90.1750.10:FF:000001">
    <property type="entry name" value="E3 ubiquitin-protein ligase NEDD4-like"/>
    <property type="match status" value="1"/>
</dbReference>
<dbReference type="FunFam" id="2.60.40.150:FF:000047">
    <property type="entry name" value="Putative E3 ubiquitin-protein ligase NEDD4-like"/>
    <property type="match status" value="1"/>
</dbReference>
<dbReference type="Gene3D" id="2.20.70.10">
    <property type="match status" value="2"/>
</dbReference>
<dbReference type="Gene3D" id="2.60.40.150">
    <property type="entry name" value="C2 domain"/>
    <property type="match status" value="1"/>
</dbReference>
<dbReference type="Gene3D" id="3.30.2160.10">
    <property type="entry name" value="Hect, E3 ligase catalytic domain"/>
    <property type="match status" value="1"/>
</dbReference>
<dbReference type="Gene3D" id="3.30.2410.10">
    <property type="entry name" value="Hect, E3 ligase catalytic domain"/>
    <property type="match status" value="1"/>
</dbReference>
<dbReference type="Gene3D" id="3.90.1750.10">
    <property type="entry name" value="Hect, E3 ligase catalytic domains"/>
    <property type="match status" value="1"/>
</dbReference>
<dbReference type="InterPro" id="IPR000008">
    <property type="entry name" value="C2_dom"/>
</dbReference>
<dbReference type="InterPro" id="IPR035892">
    <property type="entry name" value="C2_domain_sf"/>
</dbReference>
<dbReference type="InterPro" id="IPR024928">
    <property type="entry name" value="E3_ub_ligase_SMURF1"/>
</dbReference>
<dbReference type="InterPro" id="IPR050409">
    <property type="entry name" value="E3_ubiq-protein_ligase"/>
</dbReference>
<dbReference type="InterPro" id="IPR000569">
    <property type="entry name" value="HECT_dom"/>
</dbReference>
<dbReference type="InterPro" id="IPR035983">
    <property type="entry name" value="Hect_E3_ubiquitin_ligase"/>
</dbReference>
<dbReference type="InterPro" id="IPR001202">
    <property type="entry name" value="WW_dom"/>
</dbReference>
<dbReference type="InterPro" id="IPR036020">
    <property type="entry name" value="WW_dom_sf"/>
</dbReference>
<dbReference type="PANTHER" id="PTHR11254:SF282">
    <property type="entry name" value="E3 UBIQUITIN-PROTEIN LIGASE NEDD4"/>
    <property type="match status" value="1"/>
</dbReference>
<dbReference type="PANTHER" id="PTHR11254">
    <property type="entry name" value="HECT DOMAIN UBIQUITIN-PROTEIN LIGASE"/>
    <property type="match status" value="1"/>
</dbReference>
<dbReference type="Pfam" id="PF00168">
    <property type="entry name" value="C2"/>
    <property type="match status" value="1"/>
</dbReference>
<dbReference type="Pfam" id="PF00632">
    <property type="entry name" value="HECT"/>
    <property type="match status" value="1"/>
</dbReference>
<dbReference type="Pfam" id="PF00397">
    <property type="entry name" value="WW"/>
    <property type="match status" value="3"/>
</dbReference>
<dbReference type="PIRSF" id="PIRSF001569">
    <property type="entry name" value="E3_ub_ligase_SMURF1"/>
    <property type="match status" value="1"/>
</dbReference>
<dbReference type="SMART" id="SM00239">
    <property type="entry name" value="C2"/>
    <property type="match status" value="1"/>
</dbReference>
<dbReference type="SMART" id="SM00119">
    <property type="entry name" value="HECTc"/>
    <property type="match status" value="1"/>
</dbReference>
<dbReference type="SMART" id="SM00456">
    <property type="entry name" value="WW"/>
    <property type="match status" value="3"/>
</dbReference>
<dbReference type="SUPFAM" id="SSF49562">
    <property type="entry name" value="C2 domain (Calcium/lipid-binding domain, CaLB)"/>
    <property type="match status" value="1"/>
</dbReference>
<dbReference type="SUPFAM" id="SSF56204">
    <property type="entry name" value="Hect, E3 ligase catalytic domain"/>
    <property type="match status" value="1"/>
</dbReference>
<dbReference type="SUPFAM" id="SSF51045">
    <property type="entry name" value="WW domain"/>
    <property type="match status" value="3"/>
</dbReference>
<dbReference type="PROSITE" id="PS50004">
    <property type="entry name" value="C2"/>
    <property type="match status" value="1"/>
</dbReference>
<dbReference type="PROSITE" id="PS50237">
    <property type="entry name" value="HECT"/>
    <property type="match status" value="1"/>
</dbReference>
<dbReference type="PROSITE" id="PS01159">
    <property type="entry name" value="WW_DOMAIN_1"/>
    <property type="match status" value="3"/>
</dbReference>
<dbReference type="PROSITE" id="PS50020">
    <property type="entry name" value="WW_DOMAIN_2"/>
    <property type="match status" value="3"/>
</dbReference>
<organism>
    <name type="scientific">Rattus norvegicus</name>
    <name type="common">Rat</name>
    <dbReference type="NCBI Taxonomy" id="10116"/>
    <lineage>
        <taxon>Eukaryota</taxon>
        <taxon>Metazoa</taxon>
        <taxon>Chordata</taxon>
        <taxon>Craniata</taxon>
        <taxon>Vertebrata</taxon>
        <taxon>Euteleostomi</taxon>
        <taxon>Mammalia</taxon>
        <taxon>Eutheria</taxon>
        <taxon>Euarchontoglires</taxon>
        <taxon>Glires</taxon>
        <taxon>Rodentia</taxon>
        <taxon>Myomorpha</taxon>
        <taxon>Muroidea</taxon>
        <taxon>Muridae</taxon>
        <taxon>Murinae</taxon>
        <taxon>Rattus</taxon>
    </lineage>
</organism>
<protein>
    <recommendedName>
        <fullName>E3 ubiquitin-protein ligase NEDD4</fullName>
        <ecNumber evidence="2">2.3.2.26</ecNumber>
    </recommendedName>
    <alternativeName>
        <fullName>HECT-type E3 ubiquitin transferase NEDD4</fullName>
    </alternativeName>
</protein>
<gene>
    <name type="primary">Nedd4</name>
    <name type="synonym">Nedd4a</name>
    <name evidence="2" type="synonym">Rpf1</name>
</gene>
<accession>Q62940</accession>
<sequence length="887" mass="102395">MAADDTEAPVLSEDEVWEFCLDKNEEGGGSPGSDVTDTCEPPCGCWELNPSSLEEEHVLFTAESIISSFNNDDTRVVRVKVIAGIGLAKKDILGASDPYVRVTLYDPMSGVLTSVQTKTIKKSLNPKWNEEILFRVLPQQHRILFEVFDENRLTRDDFLGQVDVPLYPLPTENPRMERPYTFKDFVLHPRSHKSRVKGYLRLKMTYLPKNGSDDENADQAEELEPGWVVLDQPDAATHLQHPPEPSPLPPGWEERQDVLGRTYYVNHESRTTQWKRPSPEDDLTDDENGDIQLQAHGAFTTRRQISEDVDGPDNHESPENWEIVREDENTIYSGQAVQSPPSGHPDVQVRLAEELDTRLTMYGNPATSQPVTSSNHSSRGGSSQTCIFEEQPTLPVLLPTSSGLPPGWEEKQDDRGRSYYVDHNSKTTTWSKPTMQDDPRSKIPAHLRGKTPVDSNDLGPLPPGWEERTHTDGRVFFINHNIKKTQWEDPRMQNVAITGPAEPYSRDYKRKYEFFRRKLKKQTDIPNKFEMKLRRANILEDSYRRIMGVKRADFLKARLWIEFDGEKGLDYGGVAREWFFLISKEMFNPYYGLFEYSATEDNYTLQINPNSGLCNEDHLSYFKFIGRVAGMAVYHGKLLDGFFIRPFYKMMLQKLITLHDMESVDSEYYSSLRWILENDPTELDLRFIIDEELFGQTHQHELKTGGSEVVVTNKNKKEYIYLVIQWRFVNRIQKQMAAFKEGFFELIPQDLIKIFDENELELLMCGLGDVDVNDWREHTKYKNGYSLNHQVIHWFWKAVLMMDSEKRIRLLQFVTGTSRVPMNGFAELYGSNGPQSFTVEQWGTPDKLPRAHTCFNRLDLPPYESFDELWDKLQMAIENTQGFDGVD</sequence>
<evidence type="ECO:0000250" key="1"/>
<evidence type="ECO:0000250" key="2">
    <source>
        <dbReference type="UniProtKB" id="P46934"/>
    </source>
</evidence>
<evidence type="ECO:0000250" key="3">
    <source>
        <dbReference type="UniProtKB" id="P46935"/>
    </source>
</evidence>
<evidence type="ECO:0000255" key="4">
    <source>
        <dbReference type="PROSITE-ProRule" id="PRU00041"/>
    </source>
</evidence>
<evidence type="ECO:0000255" key="5">
    <source>
        <dbReference type="PROSITE-ProRule" id="PRU00104"/>
    </source>
</evidence>
<evidence type="ECO:0000255" key="6">
    <source>
        <dbReference type="PROSITE-ProRule" id="PRU00224"/>
    </source>
</evidence>
<evidence type="ECO:0000256" key="7">
    <source>
        <dbReference type="SAM" id="MobiDB-lite"/>
    </source>
</evidence>
<evidence type="ECO:0000269" key="8">
    <source>
    </source>
</evidence>
<evidence type="ECO:0000269" key="9">
    <source>
    </source>
</evidence>
<evidence type="ECO:0000269" key="10">
    <source>
    </source>
</evidence>
<evidence type="ECO:0007744" key="11">
    <source>
    </source>
</evidence>
<evidence type="ECO:0007829" key="12">
    <source>
        <dbReference type="PDB" id="1I5H"/>
    </source>
</evidence>
<evidence type="ECO:0007829" key="13">
    <source>
        <dbReference type="PDB" id="2N8S"/>
    </source>
</evidence>
<evidence type="ECO:0007829" key="14">
    <source>
        <dbReference type="PDB" id="2N8T"/>
    </source>
</evidence>
<evidence type="ECO:0007829" key="15">
    <source>
        <dbReference type="PDB" id="2N8U"/>
    </source>
</evidence>
<comment type="function">
    <text evidence="2 3 9">E3 ubiquitin-protein ligase which accepts ubiquitin from an E2 ubiquitin-conjugating enzyme in the form of a thioester and then directly transfers the ubiquitin to targeted substrates. Specifically ubiquitinates 'Lys-63' in target proteins (By similarity). Monoubiquitinates IGF1R at multiple sites, thus leading to receptor internalization and degradation in lysosomes. Ubiquitinates FGFR1, leading to receptor internalization and degradation in lysosomes. Promotes ubiquitination of RAPGEF2. Involved in the pathway leading to the degradation of VEGFR-2/KDFR, independently of its ubiquitin-ligase activity. Is involved in ubiquitination of ERBB4 intracellular domain E4ICD (By similarity). Part of a signaling complex composed of NEDD4, RAP2A and TNIK which regulates neuronal dendrite extension and arborization during development (PubMed:20159449). Ubiquitinates TNK2 and regulates EGF-induced degradation of EGFR and TNF2 (By similarity). Ubiquitinates BRAT1 and this ubiquitination is enhanced in the presence of NDFIP1 (By similarity). Ubiquitinates DAZAP2, leading to its proteasomal degradation (By similarity). Ubiquitinates POLR2A (By similarity). Functions as a platform to recruit USP13 to form an NEDD4-USP13 deubiquitination complex that plays a critical role in cleaving the 'Lys-48'-linked ubiquitin chains of VPS34 and then stabilizing VPS34, thus promoting the formation of autophagosomes (By similarity).</text>
</comment>
<comment type="catalytic activity">
    <reaction evidence="2">
        <text>S-ubiquitinyl-[E2 ubiquitin-conjugating enzyme]-L-cysteine + [acceptor protein]-L-lysine = [E2 ubiquitin-conjugating enzyme]-L-cysteine + N(6)-ubiquitinyl-[acceptor protein]-L-lysine.</text>
        <dbReference type="EC" id="2.3.2.26"/>
    </reaction>
</comment>
<comment type="activity regulation">
    <text evidence="1">Activated by NDFIP1- and NDFIP2-binding.</text>
</comment>
<comment type="pathway">
    <text>Protein modification; protein ubiquitination.</text>
</comment>
<comment type="subunit">
    <text evidence="2 3 8 9 10">Interacts with UBE2D2 (By similarity). Binds, in vitro, through the WW2 and WW3 domains, to neural isoforms of ENAH that contain the PPSY motif. Interacts with BEAN1, LITAF, RNF11, WBP1, WBP2, PMEPAI, NDFIP1, and PRRG2 (By similarity). Interacts (via C2 domain) with GRB10 (via SH2 domain) (By similarity). Interacts SCNN1A, SCNN1B and SCNN1G; regulates the activity of the epithelial Na(+) channel (ENaC) through ubiquitination, degradation and intracellular retention. Interacts with ERBB4. Interacts with NDFIP1 and NDFIP2; this interaction activates the E3 ubiquitin-protein ligase and may induce its recruitment to exosomes (By similarity). Interacts with TNIK; the interaction is direct, allows the TNIK-dependent recruitment of RAP2A and its ubiquitination by NEDD4 (PubMed:20159449). Interacts (via WW3 domain) with TNK2; EGF promotes this interaction. Interacts (via WW3 domain) with FGFR1 (via C-terminus). Interacts with OTUD7B (By similarity). Interacts with ISG15 (By similarity). Interacts (via WW domain) with RAPGEF2; this interaction leads to ubiquitination and degradation via the proteasome pathway. Interacts (via WW domains) with ARRDC3 (via PPXY motifs) (By similarity). Interacts with LAPTM4B; may play a role in the lysosomal sorting of LAPTM4B (By similarity). Interacts with ZBTB7B (By similarity). Interacts with PRRG4 (via cytoplasmic domain) (By similarity). Interacts directly with LDLRAD3; this interaction promotes NEDD4 auto-ubiquitination (By similarity). Interacts with ADRB2 (By similarity). Interacts (via WW domains) with DAZAP2 (via PPAY motif) (By similarity).</text>
</comment>
<comment type="subcellular location">
    <subcellularLocation>
        <location evidence="9">Cytoplasm</location>
    </subcellularLocation>
    <subcellularLocation>
        <location evidence="2">Nucleus</location>
    </subcellularLocation>
    <subcellularLocation>
        <location evidence="2">Cell membrane</location>
        <topology evidence="2">Peripheral membrane protein</topology>
    </subcellularLocation>
    <text evidence="2 3">Predominantly cytoplasmic but also located in the nucleus (By similarity). Recruited to the plasma membrane by GRB10. Once complexed with GRB10 and IGF1R, follows IGF1R internalization, remaining associated with early endosomes. Uncouples from IGF1R-containing endosomes before the sorting of the receptor to the lysosomal compartment (By similarity). May be recruited to exosomes by NDFIP1 (By similarity).</text>
</comment>
<comment type="tissue specificity">
    <text evidence="9">Ubiquitously expressed. Expression is highest in lung, kidney and brain.</text>
</comment>
<comment type="developmental stage">
    <text evidence="9">Down-regulated after synapse formation.</text>
</comment>
<comment type="domain">
    <text evidence="2 3 8 10">WW domains are involved in recognizing PPxY motifs in substrate proteins (PubMed:11323714, PubMed:8665844). The WW domains mediate interaction with LITAF, RNF11, WBP1, WBP2, PMEPAI, NDFIP1 and PRRG2 (By similarity).</text>
</comment>
<comment type="PTM">
    <text evidence="2">Undergoes 'Lys-29'-linked auto-ubiquitination at Lys-847 and serves as a scaffold for recruiting USP13 to form an NEDD4-USP13 deubiquitination complex.</text>
</comment>
<comment type="miscellaneous">
    <text>A cysteine residue is required for ubiquitin-thioester formation.</text>
</comment>
<proteinExistence type="evidence at protein level"/>
<reference key="1">
    <citation type="journal article" date="1996" name="EMBO J.">
        <title>WW domains of Nedd4 bind to the proline-rich PY motifs in the epithelial Na+ channel deleted in Liddle's syndrome.</title>
        <authorList>
            <person name="Staub O."/>
            <person name="Dho S."/>
            <person name="Henry P."/>
            <person name="Correa J."/>
            <person name="Ishikawa T."/>
            <person name="McGlade J."/>
            <person name="Rotin D."/>
        </authorList>
    </citation>
    <scope>NUCLEOTIDE SEQUENCE [MRNA]</scope>
    <scope>DOMAIN</scope>
    <source>
        <tissue>Lung</tissue>
    </source>
</reference>
<reference key="2">
    <citation type="journal article" date="2010" name="Neuron">
        <title>Regulation of Rap2A by the ubiquitin ligase Nedd4-1 controls neurite development.</title>
        <authorList>
            <person name="Kawabe H."/>
            <person name="Neeb A."/>
            <person name="Dimova K."/>
            <person name="Young S.M. Jr."/>
            <person name="Takeda M."/>
            <person name="Katsurabayashi S."/>
            <person name="Mitkovski M."/>
            <person name="Malakhova O.A."/>
            <person name="Zhang D.E."/>
            <person name="Umikawa M."/>
            <person name="Kariya K."/>
            <person name="Goebbels S."/>
            <person name="Nave K.A."/>
            <person name="Rosenmund C."/>
            <person name="Jahn O."/>
            <person name="Rhee J."/>
            <person name="Brose N."/>
        </authorList>
    </citation>
    <scope>FUNCTION</scope>
    <scope>INTERACTION WITH RAP2A AND TNIK</scope>
    <scope>SUBCELLULAR LOCATION</scope>
    <scope>DEVELOPMENTAL STAGE</scope>
    <scope>TISSUE SPECIFICITY</scope>
</reference>
<reference key="3">
    <citation type="journal article" date="2012" name="Nat. Commun.">
        <title>Quantitative maps of protein phosphorylation sites across 14 different rat organs and tissues.</title>
        <authorList>
            <person name="Lundby A."/>
            <person name="Secher A."/>
            <person name="Lage K."/>
            <person name="Nordsborg N.B."/>
            <person name="Dmytriyev A."/>
            <person name="Lundby C."/>
            <person name="Olsen J.V."/>
        </authorList>
    </citation>
    <scope>PHOSPHORYLATION [LARGE SCALE ANALYSIS] AT SER-212 AND SER-306</scope>
    <scope>IDENTIFICATION BY MASS SPECTROMETRY [LARGE SCALE ANALYSIS]</scope>
</reference>
<reference key="4">
    <citation type="journal article" date="2001" name="Nat. Struct. Biol.">
        <title>Solution structure of a Nedd4 WW domain-ENaC peptide complex.</title>
        <authorList>
            <person name="Kanelis V."/>
            <person name="Rotin D."/>
            <person name="Forman-Kay J.D."/>
        </authorList>
    </citation>
    <scope>STRUCTURE BY NMR OF 452-499 IN COMPLEX WITH SCNN1B</scope>
    <scope>DOMAIN</scope>
</reference>
<feature type="chain" id="PRO_0000120321" description="E3 ubiquitin-protein ligase NEDD4">
    <location>
        <begin position="1"/>
        <end position="887"/>
    </location>
</feature>
<feature type="domain" description="C2" evidence="4">
    <location>
        <begin position="54"/>
        <end position="180"/>
    </location>
</feature>
<feature type="domain" description="WW 1" evidence="6">
    <location>
        <begin position="246"/>
        <end position="279"/>
    </location>
</feature>
<feature type="domain" description="WW 2" evidence="6">
    <location>
        <begin position="402"/>
        <end position="435"/>
    </location>
</feature>
<feature type="domain" description="WW 3" evidence="6">
    <location>
        <begin position="459"/>
        <end position="492"/>
    </location>
</feature>
<feature type="domain" description="HECT" evidence="5">
    <location>
        <begin position="551"/>
        <end position="887"/>
    </location>
</feature>
<feature type="region of interest" description="Mediates interaction with TNIK" evidence="1">
    <location>
        <begin position="214"/>
        <end position="548"/>
    </location>
</feature>
<feature type="region of interest" description="Disordered" evidence="7">
    <location>
        <begin position="297"/>
        <end position="319"/>
    </location>
</feature>
<feature type="region of interest" description="Disordered" evidence="7">
    <location>
        <begin position="362"/>
        <end position="384"/>
    </location>
</feature>
<feature type="region of interest" description="Disordered" evidence="7">
    <location>
        <begin position="396"/>
        <end position="440"/>
    </location>
</feature>
<feature type="short sequence motif" description="Nuclear export signal" evidence="2">
    <location>
        <begin position="351"/>
        <end position="361"/>
    </location>
</feature>
<feature type="compositionally biased region" description="Low complexity" evidence="7">
    <location>
        <begin position="373"/>
        <end position="383"/>
    </location>
</feature>
<feature type="compositionally biased region" description="Basic and acidic residues" evidence="7">
    <location>
        <begin position="408"/>
        <end position="417"/>
    </location>
</feature>
<feature type="active site" description="Glycyl thioester intermediate" evidence="5">
    <location>
        <position position="854"/>
    </location>
</feature>
<feature type="modified residue" description="Phosphoserine" evidence="11">
    <location>
        <position position="212"/>
    </location>
</feature>
<feature type="modified residue" description="Phosphothreonine" evidence="3">
    <location>
        <position position="284"/>
    </location>
</feature>
<feature type="modified residue" description="Phosphoserine" evidence="11">
    <location>
        <position position="306"/>
    </location>
</feature>
<feature type="modified residue" description="Phosphoserine" evidence="2">
    <location>
        <position position="377"/>
    </location>
</feature>
<feature type="modified residue" description="Phosphoserine" evidence="2">
    <location>
        <position position="382"/>
    </location>
</feature>
<feature type="cross-link" description="Glycyl lysine isopeptide (Lys-Gly) (interchain with G-Cter in ubiquitin)" evidence="2">
    <location>
        <position position="847"/>
    </location>
</feature>
<feature type="strand" evidence="13">
    <location>
        <begin position="252"/>
        <end position="256"/>
    </location>
</feature>
<feature type="strand" evidence="13">
    <location>
        <begin position="262"/>
        <end position="266"/>
    </location>
</feature>
<feature type="turn" evidence="13">
    <location>
        <begin position="267"/>
        <end position="269"/>
    </location>
</feature>
<feature type="strand" evidence="13">
    <location>
        <begin position="272"/>
        <end position="275"/>
    </location>
</feature>
<feature type="strand" evidence="14">
    <location>
        <begin position="401"/>
        <end position="404"/>
    </location>
</feature>
<feature type="strand" evidence="14">
    <location>
        <begin position="408"/>
        <end position="412"/>
    </location>
</feature>
<feature type="strand" evidence="15">
    <location>
        <begin position="414"/>
        <end position="416"/>
    </location>
</feature>
<feature type="strand" evidence="14">
    <location>
        <begin position="418"/>
        <end position="422"/>
    </location>
</feature>
<feature type="turn" evidence="14">
    <location>
        <begin position="423"/>
        <end position="426"/>
    </location>
</feature>
<feature type="strand" evidence="15">
    <location>
        <begin position="427"/>
        <end position="429"/>
    </location>
</feature>
<feature type="strand" evidence="12">
    <location>
        <begin position="454"/>
        <end position="456"/>
    </location>
</feature>
<feature type="strand" evidence="12">
    <location>
        <begin position="465"/>
        <end position="469"/>
    </location>
</feature>
<feature type="strand" evidence="12">
    <location>
        <begin position="475"/>
        <end position="479"/>
    </location>
</feature>
<feature type="turn" evidence="12">
    <location>
        <begin position="480"/>
        <end position="483"/>
    </location>
</feature>
<feature type="strand" evidence="12">
    <location>
        <begin position="484"/>
        <end position="488"/>
    </location>
</feature>
<feature type="turn" evidence="12">
    <location>
        <begin position="490"/>
        <end position="492"/>
    </location>
</feature>
<name>NEDD4_RAT</name>
<keyword id="KW-0002">3D-structure</keyword>
<keyword id="KW-1003">Cell membrane</keyword>
<keyword id="KW-0963">Cytoplasm</keyword>
<keyword id="KW-1017">Isopeptide bond</keyword>
<keyword id="KW-0472">Membrane</keyword>
<keyword id="KW-0524">Neurogenesis</keyword>
<keyword id="KW-0539">Nucleus</keyword>
<keyword id="KW-0597">Phosphoprotein</keyword>
<keyword id="KW-1185">Reference proteome</keyword>
<keyword id="KW-0677">Repeat</keyword>
<keyword id="KW-0808">Transferase</keyword>
<keyword id="KW-0832">Ubl conjugation</keyword>
<keyword id="KW-0833">Ubl conjugation pathway</keyword>